<proteinExistence type="inferred from homology"/>
<dbReference type="EC" id="2.7.1.11" evidence="1"/>
<dbReference type="EMBL" id="FM178379">
    <property type="protein sequence ID" value="CAQ80478.1"/>
    <property type="molecule type" value="Genomic_DNA"/>
</dbReference>
<dbReference type="RefSeq" id="WP_012551230.1">
    <property type="nucleotide sequence ID" value="NC_011312.1"/>
</dbReference>
<dbReference type="SMR" id="B6EMS4"/>
<dbReference type="KEGG" id="vsa:VSAL_I2794"/>
<dbReference type="eggNOG" id="COG0205">
    <property type="taxonomic scope" value="Bacteria"/>
</dbReference>
<dbReference type="HOGENOM" id="CLU_020655_0_1_6"/>
<dbReference type="UniPathway" id="UPA00109">
    <property type="reaction ID" value="UER00182"/>
</dbReference>
<dbReference type="Proteomes" id="UP000001730">
    <property type="component" value="Chromosome 1"/>
</dbReference>
<dbReference type="GO" id="GO:0005945">
    <property type="term" value="C:6-phosphofructokinase complex"/>
    <property type="evidence" value="ECO:0007669"/>
    <property type="project" value="TreeGrafter"/>
</dbReference>
<dbReference type="GO" id="GO:0003872">
    <property type="term" value="F:6-phosphofructokinase activity"/>
    <property type="evidence" value="ECO:0007669"/>
    <property type="project" value="UniProtKB-UniRule"/>
</dbReference>
<dbReference type="GO" id="GO:0016208">
    <property type="term" value="F:AMP binding"/>
    <property type="evidence" value="ECO:0007669"/>
    <property type="project" value="TreeGrafter"/>
</dbReference>
<dbReference type="GO" id="GO:0005524">
    <property type="term" value="F:ATP binding"/>
    <property type="evidence" value="ECO:0007669"/>
    <property type="project" value="UniProtKB-KW"/>
</dbReference>
<dbReference type="GO" id="GO:0070095">
    <property type="term" value="F:fructose-6-phosphate binding"/>
    <property type="evidence" value="ECO:0007669"/>
    <property type="project" value="TreeGrafter"/>
</dbReference>
<dbReference type="GO" id="GO:0042802">
    <property type="term" value="F:identical protein binding"/>
    <property type="evidence" value="ECO:0007669"/>
    <property type="project" value="TreeGrafter"/>
</dbReference>
<dbReference type="GO" id="GO:0046872">
    <property type="term" value="F:metal ion binding"/>
    <property type="evidence" value="ECO:0007669"/>
    <property type="project" value="UniProtKB-KW"/>
</dbReference>
<dbReference type="GO" id="GO:0048029">
    <property type="term" value="F:monosaccharide binding"/>
    <property type="evidence" value="ECO:0007669"/>
    <property type="project" value="TreeGrafter"/>
</dbReference>
<dbReference type="GO" id="GO:0061621">
    <property type="term" value="P:canonical glycolysis"/>
    <property type="evidence" value="ECO:0007669"/>
    <property type="project" value="TreeGrafter"/>
</dbReference>
<dbReference type="GO" id="GO:0030388">
    <property type="term" value="P:fructose 1,6-bisphosphate metabolic process"/>
    <property type="evidence" value="ECO:0007669"/>
    <property type="project" value="TreeGrafter"/>
</dbReference>
<dbReference type="GO" id="GO:0006002">
    <property type="term" value="P:fructose 6-phosphate metabolic process"/>
    <property type="evidence" value="ECO:0007669"/>
    <property type="project" value="InterPro"/>
</dbReference>
<dbReference type="CDD" id="cd00763">
    <property type="entry name" value="Bacterial_PFK"/>
    <property type="match status" value="1"/>
</dbReference>
<dbReference type="FunFam" id="3.40.50.450:FF:000001">
    <property type="entry name" value="ATP-dependent 6-phosphofructokinase"/>
    <property type="match status" value="1"/>
</dbReference>
<dbReference type="FunFam" id="3.40.50.460:FF:000002">
    <property type="entry name" value="ATP-dependent 6-phosphofructokinase"/>
    <property type="match status" value="1"/>
</dbReference>
<dbReference type="Gene3D" id="3.40.50.450">
    <property type="match status" value="1"/>
</dbReference>
<dbReference type="Gene3D" id="3.40.50.460">
    <property type="entry name" value="Phosphofructokinase domain"/>
    <property type="match status" value="1"/>
</dbReference>
<dbReference type="HAMAP" id="MF_00339">
    <property type="entry name" value="Phosphofructokinase_I_B1"/>
    <property type="match status" value="1"/>
</dbReference>
<dbReference type="InterPro" id="IPR022953">
    <property type="entry name" value="ATP_PFK"/>
</dbReference>
<dbReference type="InterPro" id="IPR012003">
    <property type="entry name" value="ATP_PFK_prok-type"/>
</dbReference>
<dbReference type="InterPro" id="IPR012828">
    <property type="entry name" value="PFKA_ATP_prok"/>
</dbReference>
<dbReference type="InterPro" id="IPR015912">
    <property type="entry name" value="Phosphofructokinase_CS"/>
</dbReference>
<dbReference type="InterPro" id="IPR000023">
    <property type="entry name" value="Phosphofructokinase_dom"/>
</dbReference>
<dbReference type="InterPro" id="IPR035966">
    <property type="entry name" value="PKF_sf"/>
</dbReference>
<dbReference type="NCBIfam" id="TIGR02482">
    <property type="entry name" value="PFKA_ATP"/>
    <property type="match status" value="1"/>
</dbReference>
<dbReference type="NCBIfam" id="NF002872">
    <property type="entry name" value="PRK03202.1"/>
    <property type="match status" value="1"/>
</dbReference>
<dbReference type="PANTHER" id="PTHR13697:SF4">
    <property type="entry name" value="ATP-DEPENDENT 6-PHOSPHOFRUCTOKINASE"/>
    <property type="match status" value="1"/>
</dbReference>
<dbReference type="PANTHER" id="PTHR13697">
    <property type="entry name" value="PHOSPHOFRUCTOKINASE"/>
    <property type="match status" value="1"/>
</dbReference>
<dbReference type="Pfam" id="PF00365">
    <property type="entry name" value="PFK"/>
    <property type="match status" value="1"/>
</dbReference>
<dbReference type="PIRSF" id="PIRSF000532">
    <property type="entry name" value="ATP_PFK_prok"/>
    <property type="match status" value="1"/>
</dbReference>
<dbReference type="PRINTS" id="PR00476">
    <property type="entry name" value="PHFRCTKINASE"/>
</dbReference>
<dbReference type="SUPFAM" id="SSF53784">
    <property type="entry name" value="Phosphofructokinase"/>
    <property type="match status" value="1"/>
</dbReference>
<dbReference type="PROSITE" id="PS00433">
    <property type="entry name" value="PHOSPHOFRUCTOKINASE"/>
    <property type="match status" value="1"/>
</dbReference>
<feature type="chain" id="PRO_1000120024" description="ATP-dependent 6-phosphofructokinase">
    <location>
        <begin position="1"/>
        <end position="320"/>
    </location>
</feature>
<feature type="active site" description="Proton acceptor" evidence="1">
    <location>
        <position position="128"/>
    </location>
</feature>
<feature type="binding site" evidence="1">
    <location>
        <position position="12"/>
    </location>
    <ligand>
        <name>ATP</name>
        <dbReference type="ChEBI" id="CHEBI:30616"/>
    </ligand>
</feature>
<feature type="binding site" evidence="1">
    <location>
        <begin position="22"/>
        <end position="26"/>
    </location>
    <ligand>
        <name>ADP</name>
        <dbReference type="ChEBI" id="CHEBI:456216"/>
        <note>allosteric activator; ligand shared between dimeric partners</note>
    </ligand>
</feature>
<feature type="binding site" evidence="1">
    <location>
        <begin position="73"/>
        <end position="74"/>
    </location>
    <ligand>
        <name>ATP</name>
        <dbReference type="ChEBI" id="CHEBI:30616"/>
    </ligand>
</feature>
<feature type="binding site" evidence="1">
    <location>
        <begin position="103"/>
        <end position="106"/>
    </location>
    <ligand>
        <name>ATP</name>
        <dbReference type="ChEBI" id="CHEBI:30616"/>
    </ligand>
</feature>
<feature type="binding site" evidence="1">
    <location>
        <position position="104"/>
    </location>
    <ligand>
        <name>Mg(2+)</name>
        <dbReference type="ChEBI" id="CHEBI:18420"/>
        <note>catalytic</note>
    </ligand>
</feature>
<feature type="binding site" description="in other chain" evidence="1">
    <location>
        <begin position="126"/>
        <end position="128"/>
    </location>
    <ligand>
        <name>substrate</name>
        <note>ligand shared between dimeric partners</note>
    </ligand>
</feature>
<feature type="binding site" description="in other chain" evidence="1">
    <location>
        <position position="155"/>
    </location>
    <ligand>
        <name>ADP</name>
        <dbReference type="ChEBI" id="CHEBI:456216"/>
        <note>allosteric activator; ligand shared between dimeric partners</note>
    </ligand>
</feature>
<feature type="binding site" evidence="1">
    <location>
        <position position="163"/>
    </location>
    <ligand>
        <name>substrate</name>
        <note>ligand shared between dimeric partners</note>
    </ligand>
</feature>
<feature type="binding site" description="in other chain" evidence="1">
    <location>
        <begin position="170"/>
        <end position="172"/>
    </location>
    <ligand>
        <name>substrate</name>
        <note>ligand shared between dimeric partners</note>
    </ligand>
</feature>
<feature type="binding site" description="in other chain" evidence="1">
    <location>
        <begin position="186"/>
        <end position="188"/>
    </location>
    <ligand>
        <name>ADP</name>
        <dbReference type="ChEBI" id="CHEBI:456216"/>
        <note>allosteric activator; ligand shared between dimeric partners</note>
    </ligand>
</feature>
<feature type="binding site" description="in other chain" evidence="1">
    <location>
        <position position="212"/>
    </location>
    <ligand>
        <name>ADP</name>
        <dbReference type="ChEBI" id="CHEBI:456216"/>
        <note>allosteric activator; ligand shared between dimeric partners</note>
    </ligand>
</feature>
<feature type="binding site" description="in other chain" evidence="1">
    <location>
        <begin position="214"/>
        <end position="216"/>
    </location>
    <ligand>
        <name>ADP</name>
        <dbReference type="ChEBI" id="CHEBI:456216"/>
        <note>allosteric activator; ligand shared between dimeric partners</note>
    </ligand>
</feature>
<feature type="binding site" description="in other chain" evidence="1">
    <location>
        <position position="223"/>
    </location>
    <ligand>
        <name>substrate</name>
        <note>ligand shared between dimeric partners</note>
    </ligand>
</feature>
<feature type="binding site" evidence="1">
    <location>
        <position position="244"/>
    </location>
    <ligand>
        <name>substrate</name>
        <note>ligand shared between dimeric partners</note>
    </ligand>
</feature>
<feature type="binding site" description="in other chain" evidence="1">
    <location>
        <begin position="250"/>
        <end position="253"/>
    </location>
    <ligand>
        <name>substrate</name>
        <note>ligand shared between dimeric partners</note>
    </ligand>
</feature>
<gene>
    <name evidence="1" type="primary">pfkA</name>
    <name type="ordered locus">VSAL_I2794</name>
</gene>
<comment type="function">
    <text evidence="1">Catalyzes the phosphorylation of D-fructose 6-phosphate to fructose 1,6-bisphosphate by ATP, the first committing step of glycolysis.</text>
</comment>
<comment type="catalytic activity">
    <reaction evidence="1">
        <text>beta-D-fructose 6-phosphate + ATP = beta-D-fructose 1,6-bisphosphate + ADP + H(+)</text>
        <dbReference type="Rhea" id="RHEA:16109"/>
        <dbReference type="ChEBI" id="CHEBI:15378"/>
        <dbReference type="ChEBI" id="CHEBI:30616"/>
        <dbReference type="ChEBI" id="CHEBI:32966"/>
        <dbReference type="ChEBI" id="CHEBI:57634"/>
        <dbReference type="ChEBI" id="CHEBI:456216"/>
        <dbReference type="EC" id="2.7.1.11"/>
    </reaction>
</comment>
<comment type="cofactor">
    <cofactor evidence="1">
        <name>Mg(2+)</name>
        <dbReference type="ChEBI" id="CHEBI:18420"/>
    </cofactor>
</comment>
<comment type="activity regulation">
    <text evidence="1">Allosterically activated by ADP and other diphosphonucleosides, and allosterically inhibited by phosphoenolpyruvate.</text>
</comment>
<comment type="pathway">
    <text evidence="1">Carbohydrate degradation; glycolysis; D-glyceraldehyde 3-phosphate and glycerone phosphate from D-glucose: step 3/4.</text>
</comment>
<comment type="subunit">
    <text evidence="1">Homotetramer.</text>
</comment>
<comment type="subcellular location">
    <subcellularLocation>
        <location evidence="1">Cytoplasm</location>
    </subcellularLocation>
</comment>
<comment type="similarity">
    <text evidence="1">Belongs to the phosphofructokinase type A (PFKA) family. ATP-dependent PFK group I subfamily. Prokaryotic clade 'B1' sub-subfamily.</text>
</comment>
<sequence>MVKKIGVLTSGGDAPGMNAAVRGVVRTALTQGLEVFGIHDGYLGLVEDRIEKLERHSVSDMINRGGTFLGSARFPEFKEVAVREKAIANLKKHDIDALIVIGGDGSYMGAKKLTEMGYPCIGLPGTIDNDIAGTDYTIGYLTALNTVIDAIDRLRDTSSSHQRISIVEVMGRHCGDLTLMAAIAGGCEYVITPETGLNKEALIQNIQDGIAKGKKHAIIAITELMTDVNALAKEIEAETGRETRATVLGHIQRGGQPGAFDRILASRMGNYGVKLLVEGHGGRCVGIQNEQLVHHDIIDAIENMRRPEKLELYKVAEELF</sequence>
<organism>
    <name type="scientific">Aliivibrio salmonicida (strain LFI1238)</name>
    <name type="common">Vibrio salmonicida (strain LFI1238)</name>
    <dbReference type="NCBI Taxonomy" id="316275"/>
    <lineage>
        <taxon>Bacteria</taxon>
        <taxon>Pseudomonadati</taxon>
        <taxon>Pseudomonadota</taxon>
        <taxon>Gammaproteobacteria</taxon>
        <taxon>Vibrionales</taxon>
        <taxon>Vibrionaceae</taxon>
        <taxon>Aliivibrio</taxon>
    </lineage>
</organism>
<accession>B6EMS4</accession>
<protein>
    <recommendedName>
        <fullName evidence="1">ATP-dependent 6-phosphofructokinase</fullName>
        <shortName evidence="1">ATP-PFK</shortName>
        <shortName evidence="1">Phosphofructokinase</shortName>
        <ecNumber evidence="1">2.7.1.11</ecNumber>
    </recommendedName>
    <alternativeName>
        <fullName evidence="1">Phosphohexokinase</fullName>
    </alternativeName>
</protein>
<reference key="1">
    <citation type="journal article" date="2008" name="BMC Genomics">
        <title>The genome sequence of the fish pathogen Aliivibrio salmonicida strain LFI1238 shows extensive evidence of gene decay.</title>
        <authorList>
            <person name="Hjerde E."/>
            <person name="Lorentzen M.S."/>
            <person name="Holden M.T."/>
            <person name="Seeger K."/>
            <person name="Paulsen S."/>
            <person name="Bason N."/>
            <person name="Churcher C."/>
            <person name="Harris D."/>
            <person name="Norbertczak H."/>
            <person name="Quail M.A."/>
            <person name="Sanders S."/>
            <person name="Thurston S."/>
            <person name="Parkhill J."/>
            <person name="Willassen N.P."/>
            <person name="Thomson N.R."/>
        </authorList>
    </citation>
    <scope>NUCLEOTIDE SEQUENCE [LARGE SCALE GENOMIC DNA]</scope>
    <source>
        <strain>LFI1238</strain>
    </source>
</reference>
<evidence type="ECO:0000255" key="1">
    <source>
        <dbReference type="HAMAP-Rule" id="MF_00339"/>
    </source>
</evidence>
<name>PFKA_ALISL</name>
<keyword id="KW-0021">Allosteric enzyme</keyword>
<keyword id="KW-0067">ATP-binding</keyword>
<keyword id="KW-0963">Cytoplasm</keyword>
<keyword id="KW-0324">Glycolysis</keyword>
<keyword id="KW-0418">Kinase</keyword>
<keyword id="KW-0460">Magnesium</keyword>
<keyword id="KW-0479">Metal-binding</keyword>
<keyword id="KW-0547">Nucleotide-binding</keyword>
<keyword id="KW-0808">Transferase</keyword>